<name>ENO_AZOSB</name>
<evidence type="ECO:0000255" key="1">
    <source>
        <dbReference type="HAMAP-Rule" id="MF_00318"/>
    </source>
</evidence>
<protein>
    <recommendedName>
        <fullName evidence="1">Enolase</fullName>
        <ecNumber evidence="1">4.2.1.11</ecNumber>
    </recommendedName>
    <alternativeName>
        <fullName evidence="1">2-phospho-D-glycerate hydro-lyase</fullName>
    </alternativeName>
    <alternativeName>
        <fullName evidence="1">2-phosphoglycerate dehydratase</fullName>
    </alternativeName>
</protein>
<organism>
    <name type="scientific">Azoarcus sp. (strain BH72)</name>
    <dbReference type="NCBI Taxonomy" id="418699"/>
    <lineage>
        <taxon>Bacteria</taxon>
        <taxon>Pseudomonadati</taxon>
        <taxon>Pseudomonadota</taxon>
        <taxon>Betaproteobacteria</taxon>
        <taxon>Rhodocyclales</taxon>
        <taxon>Zoogloeaceae</taxon>
        <taxon>Azoarcus</taxon>
    </lineage>
</organism>
<comment type="function">
    <text evidence="1">Catalyzes the reversible conversion of 2-phosphoglycerate (2-PG) into phosphoenolpyruvate (PEP). It is essential for the degradation of carbohydrates via glycolysis.</text>
</comment>
<comment type="catalytic activity">
    <reaction evidence="1">
        <text>(2R)-2-phosphoglycerate = phosphoenolpyruvate + H2O</text>
        <dbReference type="Rhea" id="RHEA:10164"/>
        <dbReference type="ChEBI" id="CHEBI:15377"/>
        <dbReference type="ChEBI" id="CHEBI:58289"/>
        <dbReference type="ChEBI" id="CHEBI:58702"/>
        <dbReference type="EC" id="4.2.1.11"/>
    </reaction>
</comment>
<comment type="cofactor">
    <cofactor evidence="1">
        <name>Mg(2+)</name>
        <dbReference type="ChEBI" id="CHEBI:18420"/>
    </cofactor>
    <text evidence="1">Binds a second Mg(2+) ion via substrate during catalysis.</text>
</comment>
<comment type="pathway">
    <text evidence="1">Carbohydrate degradation; glycolysis; pyruvate from D-glyceraldehyde 3-phosphate: step 4/5.</text>
</comment>
<comment type="subcellular location">
    <subcellularLocation>
        <location evidence="1">Cytoplasm</location>
    </subcellularLocation>
    <subcellularLocation>
        <location evidence="1">Secreted</location>
    </subcellularLocation>
    <subcellularLocation>
        <location evidence="1">Cell surface</location>
    </subcellularLocation>
    <text evidence="1">Fractions of enolase are present in both the cytoplasm and on the cell surface.</text>
</comment>
<comment type="similarity">
    <text evidence="1">Belongs to the enolase family.</text>
</comment>
<sequence>MSAIVDVIAREILDSRGNPTVEADVLLESGVMGRAAVPSGASTGSREAIELRDGDAARFLGKGVLRAVENVNTEISEAIIGLDAEEQAFIDRTLIDLDGTENKSRLGANATLAVSMAVARAAAEEAGLPLYRYFGGSGPMAMPVPMMNVINGGEHANNSLDIQECMIMPVSMGSFREALRCGAEIFHHLKKITDKKGYPTTVGDEGGFAPNVSGTEEALNLIQEAIAAAGYEPGRDVLLALDCAASEFYKDGKYELKGEGLSLTSEGFTDYLATLADKFPIVSIEDGMAEGDWAGWKHLTDRLGRKIQLVGDDLFVTNTKILEQGIDQGVANSILIKINQIGTLSETFAAVEMAKRAGYTAVISHRSGETEDSTIADIAVGLNAMQIKTGSLSRSDRIAKYNQLLRIEEDLGNTVVYPGKRAFYNLRSR</sequence>
<keyword id="KW-0963">Cytoplasm</keyword>
<keyword id="KW-0324">Glycolysis</keyword>
<keyword id="KW-0456">Lyase</keyword>
<keyword id="KW-0460">Magnesium</keyword>
<keyword id="KW-0479">Metal-binding</keyword>
<keyword id="KW-1185">Reference proteome</keyword>
<keyword id="KW-0964">Secreted</keyword>
<dbReference type="EC" id="4.2.1.11" evidence="1"/>
<dbReference type="EMBL" id="AM406670">
    <property type="protein sequence ID" value="CAL94761.1"/>
    <property type="molecule type" value="Genomic_DNA"/>
</dbReference>
<dbReference type="RefSeq" id="WP_011765875.1">
    <property type="nucleotide sequence ID" value="NC_008702.1"/>
</dbReference>
<dbReference type="SMR" id="A1K7F6"/>
<dbReference type="STRING" id="62928.azo2144"/>
<dbReference type="KEGG" id="aoa:dqs_2277"/>
<dbReference type="KEGG" id="azo:azo2144"/>
<dbReference type="eggNOG" id="COG0148">
    <property type="taxonomic scope" value="Bacteria"/>
</dbReference>
<dbReference type="HOGENOM" id="CLU_031223_2_1_4"/>
<dbReference type="OrthoDB" id="9804716at2"/>
<dbReference type="UniPathway" id="UPA00109">
    <property type="reaction ID" value="UER00187"/>
</dbReference>
<dbReference type="Proteomes" id="UP000002588">
    <property type="component" value="Chromosome"/>
</dbReference>
<dbReference type="GO" id="GO:0009986">
    <property type="term" value="C:cell surface"/>
    <property type="evidence" value="ECO:0007669"/>
    <property type="project" value="UniProtKB-SubCell"/>
</dbReference>
<dbReference type="GO" id="GO:0005576">
    <property type="term" value="C:extracellular region"/>
    <property type="evidence" value="ECO:0007669"/>
    <property type="project" value="UniProtKB-SubCell"/>
</dbReference>
<dbReference type="GO" id="GO:0000015">
    <property type="term" value="C:phosphopyruvate hydratase complex"/>
    <property type="evidence" value="ECO:0007669"/>
    <property type="project" value="InterPro"/>
</dbReference>
<dbReference type="GO" id="GO:0000287">
    <property type="term" value="F:magnesium ion binding"/>
    <property type="evidence" value="ECO:0007669"/>
    <property type="project" value="UniProtKB-UniRule"/>
</dbReference>
<dbReference type="GO" id="GO:0004634">
    <property type="term" value="F:phosphopyruvate hydratase activity"/>
    <property type="evidence" value="ECO:0007669"/>
    <property type="project" value="UniProtKB-UniRule"/>
</dbReference>
<dbReference type="GO" id="GO:0006096">
    <property type="term" value="P:glycolytic process"/>
    <property type="evidence" value="ECO:0007669"/>
    <property type="project" value="UniProtKB-UniRule"/>
</dbReference>
<dbReference type="CDD" id="cd03313">
    <property type="entry name" value="enolase"/>
    <property type="match status" value="1"/>
</dbReference>
<dbReference type="FunFam" id="3.20.20.120:FF:000001">
    <property type="entry name" value="Enolase"/>
    <property type="match status" value="1"/>
</dbReference>
<dbReference type="FunFam" id="3.30.390.10:FF:000001">
    <property type="entry name" value="Enolase"/>
    <property type="match status" value="1"/>
</dbReference>
<dbReference type="Gene3D" id="3.20.20.120">
    <property type="entry name" value="Enolase-like C-terminal domain"/>
    <property type="match status" value="1"/>
</dbReference>
<dbReference type="Gene3D" id="3.30.390.10">
    <property type="entry name" value="Enolase-like, N-terminal domain"/>
    <property type="match status" value="1"/>
</dbReference>
<dbReference type="HAMAP" id="MF_00318">
    <property type="entry name" value="Enolase"/>
    <property type="match status" value="1"/>
</dbReference>
<dbReference type="InterPro" id="IPR000941">
    <property type="entry name" value="Enolase"/>
</dbReference>
<dbReference type="InterPro" id="IPR036849">
    <property type="entry name" value="Enolase-like_C_sf"/>
</dbReference>
<dbReference type="InterPro" id="IPR029017">
    <property type="entry name" value="Enolase-like_N"/>
</dbReference>
<dbReference type="InterPro" id="IPR020810">
    <property type="entry name" value="Enolase_C"/>
</dbReference>
<dbReference type="InterPro" id="IPR020809">
    <property type="entry name" value="Enolase_CS"/>
</dbReference>
<dbReference type="InterPro" id="IPR020811">
    <property type="entry name" value="Enolase_N"/>
</dbReference>
<dbReference type="NCBIfam" id="TIGR01060">
    <property type="entry name" value="eno"/>
    <property type="match status" value="1"/>
</dbReference>
<dbReference type="PANTHER" id="PTHR11902">
    <property type="entry name" value="ENOLASE"/>
    <property type="match status" value="1"/>
</dbReference>
<dbReference type="PANTHER" id="PTHR11902:SF1">
    <property type="entry name" value="ENOLASE"/>
    <property type="match status" value="1"/>
</dbReference>
<dbReference type="Pfam" id="PF00113">
    <property type="entry name" value="Enolase_C"/>
    <property type="match status" value="1"/>
</dbReference>
<dbReference type="Pfam" id="PF03952">
    <property type="entry name" value="Enolase_N"/>
    <property type="match status" value="1"/>
</dbReference>
<dbReference type="PIRSF" id="PIRSF001400">
    <property type="entry name" value="Enolase"/>
    <property type="match status" value="1"/>
</dbReference>
<dbReference type="PRINTS" id="PR00148">
    <property type="entry name" value="ENOLASE"/>
</dbReference>
<dbReference type="SFLD" id="SFLDS00001">
    <property type="entry name" value="Enolase"/>
    <property type="match status" value="1"/>
</dbReference>
<dbReference type="SFLD" id="SFLDF00002">
    <property type="entry name" value="enolase"/>
    <property type="match status" value="1"/>
</dbReference>
<dbReference type="SMART" id="SM01192">
    <property type="entry name" value="Enolase_C"/>
    <property type="match status" value="1"/>
</dbReference>
<dbReference type="SMART" id="SM01193">
    <property type="entry name" value="Enolase_N"/>
    <property type="match status" value="1"/>
</dbReference>
<dbReference type="SUPFAM" id="SSF51604">
    <property type="entry name" value="Enolase C-terminal domain-like"/>
    <property type="match status" value="1"/>
</dbReference>
<dbReference type="SUPFAM" id="SSF54826">
    <property type="entry name" value="Enolase N-terminal domain-like"/>
    <property type="match status" value="1"/>
</dbReference>
<dbReference type="PROSITE" id="PS00164">
    <property type="entry name" value="ENOLASE"/>
    <property type="match status" value="1"/>
</dbReference>
<reference key="1">
    <citation type="journal article" date="2006" name="Nat. Biotechnol.">
        <title>Complete genome of the mutualistic, N2-fixing grass endophyte Azoarcus sp. strain BH72.</title>
        <authorList>
            <person name="Krause A."/>
            <person name="Ramakumar A."/>
            <person name="Bartels D."/>
            <person name="Battistoni F."/>
            <person name="Bekel T."/>
            <person name="Boch J."/>
            <person name="Boehm M."/>
            <person name="Friedrich F."/>
            <person name="Hurek T."/>
            <person name="Krause L."/>
            <person name="Linke B."/>
            <person name="McHardy A.C."/>
            <person name="Sarkar A."/>
            <person name="Schneiker S."/>
            <person name="Syed A.A."/>
            <person name="Thauer R."/>
            <person name="Vorhoelter F.-J."/>
            <person name="Weidner S."/>
            <person name="Puehler A."/>
            <person name="Reinhold-Hurek B."/>
            <person name="Kaiser O."/>
            <person name="Goesmann A."/>
        </authorList>
    </citation>
    <scope>NUCLEOTIDE SEQUENCE [LARGE SCALE GENOMIC DNA]</scope>
    <source>
        <strain>BH72</strain>
    </source>
</reference>
<feature type="chain" id="PRO_0000280834" description="Enolase">
    <location>
        <begin position="1"/>
        <end position="429"/>
    </location>
</feature>
<feature type="active site" description="Proton donor" evidence="1">
    <location>
        <position position="205"/>
    </location>
</feature>
<feature type="active site" description="Proton acceptor" evidence="1">
    <location>
        <position position="337"/>
    </location>
</feature>
<feature type="binding site" evidence="1">
    <location>
        <position position="163"/>
    </location>
    <ligand>
        <name>(2R)-2-phosphoglycerate</name>
        <dbReference type="ChEBI" id="CHEBI:58289"/>
    </ligand>
</feature>
<feature type="binding site" evidence="1">
    <location>
        <position position="242"/>
    </location>
    <ligand>
        <name>Mg(2+)</name>
        <dbReference type="ChEBI" id="CHEBI:18420"/>
    </ligand>
</feature>
<feature type="binding site" evidence="1">
    <location>
        <position position="285"/>
    </location>
    <ligand>
        <name>Mg(2+)</name>
        <dbReference type="ChEBI" id="CHEBI:18420"/>
    </ligand>
</feature>
<feature type="binding site" evidence="1">
    <location>
        <position position="312"/>
    </location>
    <ligand>
        <name>Mg(2+)</name>
        <dbReference type="ChEBI" id="CHEBI:18420"/>
    </ligand>
</feature>
<feature type="binding site" evidence="1">
    <location>
        <position position="337"/>
    </location>
    <ligand>
        <name>(2R)-2-phosphoglycerate</name>
        <dbReference type="ChEBI" id="CHEBI:58289"/>
    </ligand>
</feature>
<feature type="binding site" evidence="1">
    <location>
        <position position="366"/>
    </location>
    <ligand>
        <name>(2R)-2-phosphoglycerate</name>
        <dbReference type="ChEBI" id="CHEBI:58289"/>
    </ligand>
</feature>
<feature type="binding site" evidence="1">
    <location>
        <position position="367"/>
    </location>
    <ligand>
        <name>(2R)-2-phosphoglycerate</name>
        <dbReference type="ChEBI" id="CHEBI:58289"/>
    </ligand>
</feature>
<feature type="binding site" evidence="1">
    <location>
        <position position="388"/>
    </location>
    <ligand>
        <name>(2R)-2-phosphoglycerate</name>
        <dbReference type="ChEBI" id="CHEBI:58289"/>
    </ligand>
</feature>
<proteinExistence type="inferred from homology"/>
<accession>A1K7F6</accession>
<gene>
    <name evidence="1" type="primary">eno</name>
    <name type="ordered locus">azo2144</name>
</gene>